<name>AROB_STRPN</name>
<evidence type="ECO:0000255" key="1">
    <source>
        <dbReference type="HAMAP-Rule" id="MF_00110"/>
    </source>
</evidence>
<protein>
    <recommendedName>
        <fullName evidence="1">3-dehydroquinate synthase</fullName>
        <shortName evidence="1">DHQS</shortName>
        <ecNumber evidence="1">4.2.3.4</ecNumber>
    </recommendedName>
</protein>
<dbReference type="EC" id="4.2.3.4" evidence="1"/>
<dbReference type="EMBL" id="AE005672">
    <property type="protein sequence ID" value="AAK75473.1"/>
    <property type="molecule type" value="Genomic_DNA"/>
</dbReference>
<dbReference type="PIR" id="H95159">
    <property type="entry name" value="H95159"/>
</dbReference>
<dbReference type="RefSeq" id="WP_000702172.1">
    <property type="nucleotide sequence ID" value="NC_003028.3"/>
</dbReference>
<dbReference type="SMR" id="Q97Q56"/>
<dbReference type="PaxDb" id="170187-SP_1375"/>
<dbReference type="EnsemblBacteria" id="AAK75473">
    <property type="protein sequence ID" value="AAK75473"/>
    <property type="gene ID" value="SP_1375"/>
</dbReference>
<dbReference type="KEGG" id="spn:SP_1375"/>
<dbReference type="eggNOG" id="COG0337">
    <property type="taxonomic scope" value="Bacteria"/>
</dbReference>
<dbReference type="PhylomeDB" id="Q97Q56"/>
<dbReference type="BioCyc" id="SPNE170187:G1FZB-1384-MONOMER"/>
<dbReference type="UniPathway" id="UPA00053">
    <property type="reaction ID" value="UER00085"/>
</dbReference>
<dbReference type="Proteomes" id="UP000000585">
    <property type="component" value="Chromosome"/>
</dbReference>
<dbReference type="GO" id="GO:0005737">
    <property type="term" value="C:cytoplasm"/>
    <property type="evidence" value="ECO:0007669"/>
    <property type="project" value="UniProtKB-SubCell"/>
</dbReference>
<dbReference type="GO" id="GO:0003856">
    <property type="term" value="F:3-dehydroquinate synthase activity"/>
    <property type="evidence" value="ECO:0007669"/>
    <property type="project" value="UniProtKB-UniRule"/>
</dbReference>
<dbReference type="GO" id="GO:0046872">
    <property type="term" value="F:metal ion binding"/>
    <property type="evidence" value="ECO:0007669"/>
    <property type="project" value="UniProtKB-KW"/>
</dbReference>
<dbReference type="GO" id="GO:0000166">
    <property type="term" value="F:nucleotide binding"/>
    <property type="evidence" value="ECO:0007669"/>
    <property type="project" value="UniProtKB-KW"/>
</dbReference>
<dbReference type="GO" id="GO:0008652">
    <property type="term" value="P:amino acid biosynthetic process"/>
    <property type="evidence" value="ECO:0007669"/>
    <property type="project" value="UniProtKB-KW"/>
</dbReference>
<dbReference type="GO" id="GO:0009073">
    <property type="term" value="P:aromatic amino acid family biosynthetic process"/>
    <property type="evidence" value="ECO:0007669"/>
    <property type="project" value="UniProtKB-KW"/>
</dbReference>
<dbReference type="GO" id="GO:0009423">
    <property type="term" value="P:chorismate biosynthetic process"/>
    <property type="evidence" value="ECO:0007669"/>
    <property type="project" value="UniProtKB-UniRule"/>
</dbReference>
<dbReference type="CDD" id="cd08195">
    <property type="entry name" value="DHQS"/>
    <property type="match status" value="1"/>
</dbReference>
<dbReference type="FunFam" id="1.20.1090.10:FF:000012">
    <property type="entry name" value="3-dehydroquinate synthase"/>
    <property type="match status" value="1"/>
</dbReference>
<dbReference type="FunFam" id="3.40.50.1970:FF:000001">
    <property type="entry name" value="3-dehydroquinate synthase"/>
    <property type="match status" value="1"/>
</dbReference>
<dbReference type="Gene3D" id="3.40.50.1970">
    <property type="match status" value="1"/>
</dbReference>
<dbReference type="Gene3D" id="1.20.1090.10">
    <property type="entry name" value="Dehydroquinate synthase-like - alpha domain"/>
    <property type="match status" value="1"/>
</dbReference>
<dbReference type="HAMAP" id="MF_00110">
    <property type="entry name" value="DHQ_synthase"/>
    <property type="match status" value="1"/>
</dbReference>
<dbReference type="InterPro" id="IPR050071">
    <property type="entry name" value="Dehydroquinate_synthase"/>
</dbReference>
<dbReference type="InterPro" id="IPR016037">
    <property type="entry name" value="DHQ_synth_AroB"/>
</dbReference>
<dbReference type="InterPro" id="IPR030963">
    <property type="entry name" value="DHQ_synth_fam"/>
</dbReference>
<dbReference type="InterPro" id="IPR030960">
    <property type="entry name" value="DHQS/DOIS_N"/>
</dbReference>
<dbReference type="InterPro" id="IPR056179">
    <property type="entry name" value="DHQS_C"/>
</dbReference>
<dbReference type="NCBIfam" id="TIGR01357">
    <property type="entry name" value="aroB"/>
    <property type="match status" value="1"/>
</dbReference>
<dbReference type="PANTHER" id="PTHR43622">
    <property type="entry name" value="3-DEHYDROQUINATE SYNTHASE"/>
    <property type="match status" value="1"/>
</dbReference>
<dbReference type="PANTHER" id="PTHR43622:SF7">
    <property type="entry name" value="3-DEHYDROQUINATE SYNTHASE, CHLOROPLASTIC"/>
    <property type="match status" value="1"/>
</dbReference>
<dbReference type="Pfam" id="PF01761">
    <property type="entry name" value="DHQ_synthase"/>
    <property type="match status" value="1"/>
</dbReference>
<dbReference type="Pfam" id="PF24621">
    <property type="entry name" value="DHQS_C"/>
    <property type="match status" value="1"/>
</dbReference>
<dbReference type="PIRSF" id="PIRSF001455">
    <property type="entry name" value="DHQ_synth"/>
    <property type="match status" value="1"/>
</dbReference>
<dbReference type="SUPFAM" id="SSF56796">
    <property type="entry name" value="Dehydroquinate synthase-like"/>
    <property type="match status" value="1"/>
</dbReference>
<accession>Q97Q56</accession>
<feature type="chain" id="PRO_0000140792" description="3-dehydroquinate synthase">
    <location>
        <begin position="1"/>
        <end position="355"/>
    </location>
</feature>
<feature type="binding site" evidence="1">
    <location>
        <begin position="71"/>
        <end position="76"/>
    </location>
    <ligand>
        <name>NAD(+)</name>
        <dbReference type="ChEBI" id="CHEBI:57540"/>
    </ligand>
</feature>
<feature type="binding site" evidence="1">
    <location>
        <begin position="105"/>
        <end position="109"/>
    </location>
    <ligand>
        <name>NAD(+)</name>
        <dbReference type="ChEBI" id="CHEBI:57540"/>
    </ligand>
</feature>
<feature type="binding site" evidence="1">
    <location>
        <begin position="129"/>
        <end position="130"/>
    </location>
    <ligand>
        <name>NAD(+)</name>
        <dbReference type="ChEBI" id="CHEBI:57540"/>
    </ligand>
</feature>
<feature type="binding site" evidence="1">
    <location>
        <position position="142"/>
    </location>
    <ligand>
        <name>NAD(+)</name>
        <dbReference type="ChEBI" id="CHEBI:57540"/>
    </ligand>
</feature>
<feature type="binding site" evidence="1">
    <location>
        <position position="151"/>
    </location>
    <ligand>
        <name>NAD(+)</name>
        <dbReference type="ChEBI" id="CHEBI:57540"/>
    </ligand>
</feature>
<feature type="binding site" evidence="1">
    <location>
        <position position="184"/>
    </location>
    <ligand>
        <name>Zn(2+)</name>
        <dbReference type="ChEBI" id="CHEBI:29105"/>
    </ligand>
</feature>
<feature type="binding site" evidence="1">
    <location>
        <position position="246"/>
    </location>
    <ligand>
        <name>Zn(2+)</name>
        <dbReference type="ChEBI" id="CHEBI:29105"/>
    </ligand>
</feature>
<feature type="binding site" evidence="1">
    <location>
        <position position="263"/>
    </location>
    <ligand>
        <name>Zn(2+)</name>
        <dbReference type="ChEBI" id="CHEBI:29105"/>
    </ligand>
</feature>
<organism>
    <name type="scientific">Streptococcus pneumoniae serotype 4 (strain ATCC BAA-334 / TIGR4)</name>
    <dbReference type="NCBI Taxonomy" id="170187"/>
    <lineage>
        <taxon>Bacteria</taxon>
        <taxon>Bacillati</taxon>
        <taxon>Bacillota</taxon>
        <taxon>Bacilli</taxon>
        <taxon>Lactobacillales</taxon>
        <taxon>Streptococcaceae</taxon>
        <taxon>Streptococcus</taxon>
    </lineage>
</organism>
<proteinExistence type="inferred from homology"/>
<keyword id="KW-0028">Amino-acid biosynthesis</keyword>
<keyword id="KW-0057">Aromatic amino acid biosynthesis</keyword>
<keyword id="KW-0170">Cobalt</keyword>
<keyword id="KW-0963">Cytoplasm</keyword>
<keyword id="KW-0456">Lyase</keyword>
<keyword id="KW-0479">Metal-binding</keyword>
<keyword id="KW-0520">NAD</keyword>
<keyword id="KW-0547">Nucleotide-binding</keyword>
<keyword id="KW-1185">Reference proteome</keyword>
<keyword id="KW-0862">Zinc</keyword>
<comment type="function">
    <text evidence="1">Catalyzes the conversion of 3-deoxy-D-arabino-heptulosonate 7-phosphate (DAHP) to dehydroquinate (DHQ).</text>
</comment>
<comment type="catalytic activity">
    <reaction evidence="1">
        <text>7-phospho-2-dehydro-3-deoxy-D-arabino-heptonate = 3-dehydroquinate + phosphate</text>
        <dbReference type="Rhea" id="RHEA:21968"/>
        <dbReference type="ChEBI" id="CHEBI:32364"/>
        <dbReference type="ChEBI" id="CHEBI:43474"/>
        <dbReference type="ChEBI" id="CHEBI:58394"/>
        <dbReference type="EC" id="4.2.3.4"/>
    </reaction>
</comment>
<comment type="cofactor">
    <cofactor evidence="1">
        <name>NAD(+)</name>
        <dbReference type="ChEBI" id="CHEBI:57540"/>
    </cofactor>
</comment>
<comment type="cofactor">
    <cofactor evidence="1">
        <name>Co(2+)</name>
        <dbReference type="ChEBI" id="CHEBI:48828"/>
    </cofactor>
    <cofactor evidence="1">
        <name>Zn(2+)</name>
        <dbReference type="ChEBI" id="CHEBI:29105"/>
    </cofactor>
    <text evidence="1">Binds 1 divalent metal cation per subunit. Can use either Co(2+) or Zn(2+).</text>
</comment>
<comment type="pathway">
    <text evidence="1">Metabolic intermediate biosynthesis; chorismate biosynthesis; chorismate from D-erythrose 4-phosphate and phosphoenolpyruvate: step 2/7.</text>
</comment>
<comment type="subcellular location">
    <subcellularLocation>
        <location evidence="1">Cytoplasm</location>
    </subcellularLocation>
</comment>
<comment type="similarity">
    <text evidence="1">Belongs to the sugar phosphate cyclases superfamily. Dehydroquinate synthase family.</text>
</comment>
<reference key="1">
    <citation type="journal article" date="2001" name="Science">
        <title>Complete genome sequence of a virulent isolate of Streptococcus pneumoniae.</title>
        <authorList>
            <person name="Tettelin H."/>
            <person name="Nelson K.E."/>
            <person name="Paulsen I.T."/>
            <person name="Eisen J.A."/>
            <person name="Read T.D."/>
            <person name="Peterson S.N."/>
            <person name="Heidelberg J.F."/>
            <person name="DeBoy R.T."/>
            <person name="Haft D.H."/>
            <person name="Dodson R.J."/>
            <person name="Durkin A.S."/>
            <person name="Gwinn M.L."/>
            <person name="Kolonay J.F."/>
            <person name="Nelson W.C."/>
            <person name="Peterson J.D."/>
            <person name="Umayam L.A."/>
            <person name="White O."/>
            <person name="Salzberg S.L."/>
            <person name="Lewis M.R."/>
            <person name="Radune D."/>
            <person name="Holtzapple E.K."/>
            <person name="Khouri H.M."/>
            <person name="Wolf A.M."/>
            <person name="Utterback T.R."/>
            <person name="Hansen C.L."/>
            <person name="McDonald L.A."/>
            <person name="Feldblyum T.V."/>
            <person name="Angiuoli S.V."/>
            <person name="Dickinson T."/>
            <person name="Hickey E.K."/>
            <person name="Holt I.E."/>
            <person name="Loftus B.J."/>
            <person name="Yang F."/>
            <person name="Smith H.O."/>
            <person name="Venter J.C."/>
            <person name="Dougherty B.A."/>
            <person name="Morrison D.A."/>
            <person name="Hollingshead S.K."/>
            <person name="Fraser C.M."/>
        </authorList>
    </citation>
    <scope>NUCLEOTIDE SEQUENCE [LARGE SCALE GENOMIC DNA]</scope>
    <source>
        <strain>ATCC BAA-334 / TIGR4</strain>
    </source>
</reference>
<gene>
    <name evidence="1" type="primary">aroB</name>
    <name type="ordered locus">SP_1375</name>
</gene>
<sequence>MKIRIDIPHHPYDIQIEKGCMAQAGQWLRELWQPQKVVIVTDNHVASLYAEKVKLSLEDAGFQVAVFDFLEGEERKNLTTVQKVYEFLVKQGLTRSDGIVALGGGVVGDLAGFVASTYMRGIHFVQIPTSLTAQVDSSIGGKTGVNTPFAKNMVGTFAQPDGVLIDPLVLETLGKRELIEGMGEVIKYGLIEDPELWALLTGLNGSVESILEHAETLIEHSCQVKRKMVVEDELDNGIRLYLNFGHTIGHAIEATAGYGKVMHGEAVAMGMVQISKVAEEKGLMPAGITQSITEMCQKFGLPVDYENWEVGKLYQALTHDKKARGNTLKLVLVPELGSATIHPVSLEEMKDYLVK</sequence>